<keyword id="KW-0028">Amino-acid biosynthesis</keyword>
<keyword id="KW-0055">Arginine biosynthesis</keyword>
<keyword id="KW-0067">ATP-binding</keyword>
<keyword id="KW-0963">Cytoplasm</keyword>
<keyword id="KW-0418">Kinase</keyword>
<keyword id="KW-0547">Nucleotide-binding</keyword>
<keyword id="KW-1185">Reference proteome</keyword>
<keyword id="KW-0808">Transferase</keyword>
<organism>
    <name type="scientific">Mycobacterium tuberculosis (strain CDC 1551 / Oshkosh)</name>
    <dbReference type="NCBI Taxonomy" id="83331"/>
    <lineage>
        <taxon>Bacteria</taxon>
        <taxon>Bacillati</taxon>
        <taxon>Actinomycetota</taxon>
        <taxon>Actinomycetes</taxon>
        <taxon>Mycobacteriales</taxon>
        <taxon>Mycobacteriaceae</taxon>
        <taxon>Mycobacterium</taxon>
        <taxon>Mycobacterium tuberculosis complex</taxon>
    </lineage>
</organism>
<proteinExistence type="inferred from homology"/>
<feature type="chain" id="PRO_0000426862" description="Acetylglutamate kinase">
    <location>
        <begin position="1"/>
        <end position="294"/>
    </location>
</feature>
<feature type="binding site" evidence="1">
    <location>
        <begin position="69"/>
        <end position="70"/>
    </location>
    <ligand>
        <name>substrate</name>
    </ligand>
</feature>
<feature type="binding site" evidence="1">
    <location>
        <position position="91"/>
    </location>
    <ligand>
        <name>substrate</name>
    </ligand>
</feature>
<feature type="binding site" evidence="1">
    <location>
        <position position="190"/>
    </location>
    <ligand>
        <name>substrate</name>
    </ligand>
</feature>
<feature type="site" description="Transition state stabilizer" evidence="1">
    <location>
        <position position="34"/>
    </location>
</feature>
<feature type="site" description="Transition state stabilizer" evidence="1">
    <location>
        <position position="251"/>
    </location>
</feature>
<dbReference type="EC" id="2.7.2.8" evidence="1"/>
<dbReference type="EMBL" id="AE000516">
    <property type="protein sequence ID" value="AAK45961.1"/>
    <property type="molecule type" value="Genomic_DNA"/>
</dbReference>
<dbReference type="PIR" id="A70621">
    <property type="entry name" value="A70621"/>
</dbReference>
<dbReference type="RefSeq" id="WP_003917506.1">
    <property type="nucleotide sequence ID" value="NZ_KK341227.1"/>
</dbReference>
<dbReference type="SMR" id="P9WQ00"/>
<dbReference type="KEGG" id="mtc:MT1692"/>
<dbReference type="PATRIC" id="fig|83331.31.peg.1819"/>
<dbReference type="HOGENOM" id="CLU_053680_0_1_11"/>
<dbReference type="UniPathway" id="UPA00068">
    <property type="reaction ID" value="UER00107"/>
</dbReference>
<dbReference type="Proteomes" id="UP000001020">
    <property type="component" value="Chromosome"/>
</dbReference>
<dbReference type="GO" id="GO:0005737">
    <property type="term" value="C:cytoplasm"/>
    <property type="evidence" value="ECO:0007669"/>
    <property type="project" value="UniProtKB-SubCell"/>
</dbReference>
<dbReference type="GO" id="GO:0003991">
    <property type="term" value="F:acetylglutamate kinase activity"/>
    <property type="evidence" value="ECO:0007669"/>
    <property type="project" value="UniProtKB-UniRule"/>
</dbReference>
<dbReference type="GO" id="GO:0005524">
    <property type="term" value="F:ATP binding"/>
    <property type="evidence" value="ECO:0007669"/>
    <property type="project" value="UniProtKB-UniRule"/>
</dbReference>
<dbReference type="GO" id="GO:0042450">
    <property type="term" value="P:arginine biosynthetic process via ornithine"/>
    <property type="evidence" value="ECO:0007669"/>
    <property type="project" value="UniProtKB-UniRule"/>
</dbReference>
<dbReference type="GO" id="GO:0006526">
    <property type="term" value="P:L-arginine biosynthetic process"/>
    <property type="evidence" value="ECO:0007669"/>
    <property type="project" value="UniProtKB-UniPathway"/>
</dbReference>
<dbReference type="CDD" id="cd04250">
    <property type="entry name" value="AAK_NAGK-C"/>
    <property type="match status" value="1"/>
</dbReference>
<dbReference type="FunFam" id="3.40.1160.10:FF:000015">
    <property type="entry name" value="Acetylglutamate kinase"/>
    <property type="match status" value="1"/>
</dbReference>
<dbReference type="Gene3D" id="3.40.1160.10">
    <property type="entry name" value="Acetylglutamate kinase-like"/>
    <property type="match status" value="1"/>
</dbReference>
<dbReference type="HAMAP" id="MF_00082">
    <property type="entry name" value="ArgB"/>
    <property type="match status" value="1"/>
</dbReference>
<dbReference type="InterPro" id="IPR036393">
    <property type="entry name" value="AceGlu_kinase-like_sf"/>
</dbReference>
<dbReference type="InterPro" id="IPR004662">
    <property type="entry name" value="AcgluKinase_fam"/>
</dbReference>
<dbReference type="InterPro" id="IPR037528">
    <property type="entry name" value="ArgB"/>
</dbReference>
<dbReference type="InterPro" id="IPR001048">
    <property type="entry name" value="Asp/Glu/Uridylate_kinase"/>
</dbReference>
<dbReference type="InterPro" id="IPR001057">
    <property type="entry name" value="Glu/AcGlu_kinase"/>
</dbReference>
<dbReference type="InterPro" id="IPR041727">
    <property type="entry name" value="NAGK-C"/>
</dbReference>
<dbReference type="NCBIfam" id="TIGR00761">
    <property type="entry name" value="argB"/>
    <property type="match status" value="1"/>
</dbReference>
<dbReference type="PANTHER" id="PTHR23342">
    <property type="entry name" value="N-ACETYLGLUTAMATE SYNTHASE"/>
    <property type="match status" value="1"/>
</dbReference>
<dbReference type="PANTHER" id="PTHR23342:SF0">
    <property type="entry name" value="N-ACETYLGLUTAMATE SYNTHASE, MITOCHONDRIAL"/>
    <property type="match status" value="1"/>
</dbReference>
<dbReference type="Pfam" id="PF00696">
    <property type="entry name" value="AA_kinase"/>
    <property type="match status" value="1"/>
</dbReference>
<dbReference type="PIRSF" id="PIRSF000728">
    <property type="entry name" value="NAGK"/>
    <property type="match status" value="1"/>
</dbReference>
<dbReference type="PRINTS" id="PR00474">
    <property type="entry name" value="GLU5KINASE"/>
</dbReference>
<dbReference type="SUPFAM" id="SSF53633">
    <property type="entry name" value="Carbamate kinase-like"/>
    <property type="match status" value="1"/>
</dbReference>
<accession>P9WQ00</accession>
<accession>L0TA25</accession>
<accession>P0A4Y6</accession>
<accession>P94989</accession>
<sequence>MSRIEALPTHIKAQVLAEALPWLKQLHGKVVVVKYGGNAMTDDTLRRAFAADMAFLRNCGIHPVVVHGGGPQITAMLRRLGIEGDFKGGFRVTTPEVLDVARMVLFGQVGRELVNLINAHGPYAVGITGEDAQLFTAVRRSVTVDGVATDIGLVGDVDQVNTAAMLDLVAAGRIPVVSTLAPDADGVVHNINADTAAAAVAEALGAEKLLMLTDIDGLYTRWPDRDSLVSEIDTGTLAQLLPTLELGMVPKVEACLRAVIGGVPSAHIIDGRVTHCVLVELFTDAGTGTKVVRG</sequence>
<reference key="1">
    <citation type="journal article" date="2002" name="J. Bacteriol.">
        <title>Whole-genome comparison of Mycobacterium tuberculosis clinical and laboratory strains.</title>
        <authorList>
            <person name="Fleischmann R.D."/>
            <person name="Alland D."/>
            <person name="Eisen J.A."/>
            <person name="Carpenter L."/>
            <person name="White O."/>
            <person name="Peterson J.D."/>
            <person name="DeBoy R.T."/>
            <person name="Dodson R.J."/>
            <person name="Gwinn M.L."/>
            <person name="Haft D.H."/>
            <person name="Hickey E.K."/>
            <person name="Kolonay J.F."/>
            <person name="Nelson W.C."/>
            <person name="Umayam L.A."/>
            <person name="Ermolaeva M.D."/>
            <person name="Salzberg S.L."/>
            <person name="Delcher A."/>
            <person name="Utterback T.R."/>
            <person name="Weidman J.F."/>
            <person name="Khouri H.M."/>
            <person name="Gill J."/>
            <person name="Mikula A."/>
            <person name="Bishai W."/>
            <person name="Jacobs W.R. Jr."/>
            <person name="Venter J.C."/>
            <person name="Fraser C.M."/>
        </authorList>
    </citation>
    <scope>NUCLEOTIDE SEQUENCE [LARGE SCALE GENOMIC DNA]</scope>
    <source>
        <strain>CDC 1551 / Oshkosh</strain>
    </source>
</reference>
<protein>
    <recommendedName>
        <fullName evidence="1">Acetylglutamate kinase</fullName>
        <ecNumber evidence="1">2.7.2.8</ecNumber>
    </recommendedName>
    <alternativeName>
        <fullName evidence="1">N-acetyl-L-glutamate 5-phosphotransferase</fullName>
    </alternativeName>
    <alternativeName>
        <fullName evidence="1">NAG kinase</fullName>
        <shortName evidence="1">NAGK</shortName>
    </alternativeName>
</protein>
<comment type="function">
    <text evidence="1">Catalyzes the ATP-dependent phosphorylation of N-acetyl-L-glutamate.</text>
</comment>
<comment type="catalytic activity">
    <reaction evidence="1">
        <text>N-acetyl-L-glutamate + ATP = N-acetyl-L-glutamyl 5-phosphate + ADP</text>
        <dbReference type="Rhea" id="RHEA:14629"/>
        <dbReference type="ChEBI" id="CHEBI:30616"/>
        <dbReference type="ChEBI" id="CHEBI:44337"/>
        <dbReference type="ChEBI" id="CHEBI:57936"/>
        <dbReference type="ChEBI" id="CHEBI:456216"/>
        <dbReference type="EC" id="2.7.2.8"/>
    </reaction>
</comment>
<comment type="pathway">
    <text evidence="1">Amino-acid biosynthesis; L-arginine biosynthesis; N(2)-acetyl-L-ornithine from L-glutamate: step 2/4.</text>
</comment>
<comment type="subcellular location">
    <subcellularLocation>
        <location evidence="1">Cytoplasm</location>
    </subcellularLocation>
</comment>
<comment type="similarity">
    <text evidence="1">Belongs to the acetylglutamate kinase family. ArgB subfamily.</text>
</comment>
<evidence type="ECO:0000255" key="1">
    <source>
        <dbReference type="HAMAP-Rule" id="MF_00082"/>
    </source>
</evidence>
<gene>
    <name evidence="1" type="primary">argB</name>
    <name type="ordered locus">MT1692</name>
</gene>
<name>ARGB_MYCTO</name>